<evidence type="ECO:0000255" key="1">
    <source>
        <dbReference type="HAMAP-Rule" id="MF_00514"/>
    </source>
</evidence>
<evidence type="ECO:0000256" key="2">
    <source>
        <dbReference type="SAM" id="MobiDB-lite"/>
    </source>
</evidence>
<evidence type="ECO:0000305" key="3"/>
<gene>
    <name evidence="1" type="primary">rpmI</name>
    <name type="ordered locus">SPs1315</name>
</gene>
<accession>P0DE49</accession>
<accession>P66281</accession>
<accession>Q9A0E9</accession>
<keyword id="KW-0687">Ribonucleoprotein</keyword>
<keyword id="KW-0689">Ribosomal protein</keyword>
<dbReference type="EMBL" id="BA000034">
    <property type="protein sequence ID" value="BAC64410.1"/>
    <property type="molecule type" value="Genomic_DNA"/>
</dbReference>
<dbReference type="RefSeq" id="WP_002985151.1">
    <property type="nucleotide sequence ID" value="NC_004606.1"/>
</dbReference>
<dbReference type="SMR" id="P0DE49"/>
<dbReference type="GeneID" id="83690415"/>
<dbReference type="KEGG" id="sps:SPs1315"/>
<dbReference type="HOGENOM" id="CLU_169643_3_1_9"/>
<dbReference type="GO" id="GO:0022625">
    <property type="term" value="C:cytosolic large ribosomal subunit"/>
    <property type="evidence" value="ECO:0007669"/>
    <property type="project" value="TreeGrafter"/>
</dbReference>
<dbReference type="GO" id="GO:0003735">
    <property type="term" value="F:structural constituent of ribosome"/>
    <property type="evidence" value="ECO:0007669"/>
    <property type="project" value="InterPro"/>
</dbReference>
<dbReference type="GO" id="GO:0006412">
    <property type="term" value="P:translation"/>
    <property type="evidence" value="ECO:0007669"/>
    <property type="project" value="UniProtKB-UniRule"/>
</dbReference>
<dbReference type="FunFam" id="4.10.410.60:FF:000001">
    <property type="entry name" value="50S ribosomal protein L35"/>
    <property type="match status" value="1"/>
</dbReference>
<dbReference type="Gene3D" id="4.10.410.60">
    <property type="match status" value="1"/>
</dbReference>
<dbReference type="HAMAP" id="MF_00514">
    <property type="entry name" value="Ribosomal_bL35"/>
    <property type="match status" value="1"/>
</dbReference>
<dbReference type="InterPro" id="IPR001706">
    <property type="entry name" value="Ribosomal_bL35"/>
</dbReference>
<dbReference type="InterPro" id="IPR021137">
    <property type="entry name" value="Ribosomal_bL35-like"/>
</dbReference>
<dbReference type="InterPro" id="IPR018265">
    <property type="entry name" value="Ribosomal_bL35_CS"/>
</dbReference>
<dbReference type="InterPro" id="IPR037229">
    <property type="entry name" value="Ribosomal_bL35_sf"/>
</dbReference>
<dbReference type="NCBIfam" id="TIGR00001">
    <property type="entry name" value="rpmI_bact"/>
    <property type="match status" value="1"/>
</dbReference>
<dbReference type="PANTHER" id="PTHR33343">
    <property type="entry name" value="54S RIBOSOMAL PROTEIN BL35M"/>
    <property type="match status" value="1"/>
</dbReference>
<dbReference type="PANTHER" id="PTHR33343:SF1">
    <property type="entry name" value="LARGE RIBOSOMAL SUBUNIT PROTEIN BL35M"/>
    <property type="match status" value="1"/>
</dbReference>
<dbReference type="Pfam" id="PF01632">
    <property type="entry name" value="Ribosomal_L35p"/>
    <property type="match status" value="1"/>
</dbReference>
<dbReference type="PRINTS" id="PR00064">
    <property type="entry name" value="RIBOSOMALL35"/>
</dbReference>
<dbReference type="SUPFAM" id="SSF143034">
    <property type="entry name" value="L35p-like"/>
    <property type="match status" value="1"/>
</dbReference>
<dbReference type="PROSITE" id="PS00936">
    <property type="entry name" value="RIBOSOMAL_L35"/>
    <property type="match status" value="1"/>
</dbReference>
<feature type="chain" id="PRO_0000411514" description="Large ribosomal subunit protein bL35">
    <location>
        <begin position="1"/>
        <end position="65"/>
    </location>
</feature>
<feature type="region of interest" description="Disordered" evidence="2">
    <location>
        <begin position="1"/>
        <end position="20"/>
    </location>
</feature>
<feature type="compositionally biased region" description="Basic residues" evidence="2">
    <location>
        <begin position="1"/>
        <end position="16"/>
    </location>
</feature>
<sequence>MPKQKTHRASAKRFKRTGSGGLKRFRAFTSHRFHGKTKKQRRHLRKAGLVSSGDFKRIKAMVTGL</sequence>
<organism>
    <name type="scientific">Streptococcus pyogenes serotype M3 (strain SSI-1)</name>
    <dbReference type="NCBI Taxonomy" id="193567"/>
    <lineage>
        <taxon>Bacteria</taxon>
        <taxon>Bacillati</taxon>
        <taxon>Bacillota</taxon>
        <taxon>Bacilli</taxon>
        <taxon>Lactobacillales</taxon>
        <taxon>Streptococcaceae</taxon>
        <taxon>Streptococcus</taxon>
    </lineage>
</organism>
<comment type="similarity">
    <text evidence="1">Belongs to the bacterial ribosomal protein bL35 family.</text>
</comment>
<reference key="1">
    <citation type="journal article" date="2003" name="Genome Res.">
        <title>Genome sequence of an M3 strain of Streptococcus pyogenes reveals a large-scale genomic rearrangement in invasive strains and new insights into phage evolution.</title>
        <authorList>
            <person name="Nakagawa I."/>
            <person name="Kurokawa K."/>
            <person name="Yamashita A."/>
            <person name="Nakata M."/>
            <person name="Tomiyasu Y."/>
            <person name="Okahashi N."/>
            <person name="Kawabata S."/>
            <person name="Yamazaki K."/>
            <person name="Shiba T."/>
            <person name="Yasunaga T."/>
            <person name="Hayashi H."/>
            <person name="Hattori M."/>
            <person name="Hamada S."/>
        </authorList>
    </citation>
    <scope>NUCLEOTIDE SEQUENCE [LARGE SCALE GENOMIC DNA]</scope>
    <source>
        <strain>SSI-1</strain>
    </source>
</reference>
<protein>
    <recommendedName>
        <fullName evidence="1">Large ribosomal subunit protein bL35</fullName>
    </recommendedName>
    <alternativeName>
        <fullName evidence="3">50S ribosomal protein L35</fullName>
    </alternativeName>
</protein>
<proteinExistence type="inferred from homology"/>
<name>RL35_STRPQ</name>